<comment type="function">
    <text evidence="1">Catalyzes the reversible reaction in which hydroxymethyl group from 5,10-methylenetetrahydrofolate is transferred onto alpha-ketoisovalerate to form ketopantoate.</text>
</comment>
<comment type="catalytic activity">
    <reaction evidence="1">
        <text>3-methyl-2-oxobutanoate + (6R)-5,10-methylene-5,6,7,8-tetrahydrofolate + H2O = 2-dehydropantoate + (6S)-5,6,7,8-tetrahydrofolate</text>
        <dbReference type="Rhea" id="RHEA:11824"/>
        <dbReference type="ChEBI" id="CHEBI:11561"/>
        <dbReference type="ChEBI" id="CHEBI:11851"/>
        <dbReference type="ChEBI" id="CHEBI:15377"/>
        <dbReference type="ChEBI" id="CHEBI:15636"/>
        <dbReference type="ChEBI" id="CHEBI:57453"/>
        <dbReference type="EC" id="2.1.2.11"/>
    </reaction>
</comment>
<comment type="cofactor">
    <cofactor evidence="1">
        <name>Mg(2+)</name>
        <dbReference type="ChEBI" id="CHEBI:18420"/>
    </cofactor>
    <text evidence="1">Binds 1 Mg(2+) ion per subunit.</text>
</comment>
<comment type="pathway">
    <text evidence="1">Cofactor biosynthesis; (R)-pantothenate biosynthesis; (R)-pantoate from 3-methyl-2-oxobutanoate: step 1/2.</text>
</comment>
<comment type="subunit">
    <text evidence="1">Homodecamer; pentamer of dimers.</text>
</comment>
<comment type="subcellular location">
    <subcellularLocation>
        <location evidence="1">Cytoplasm</location>
    </subcellularLocation>
</comment>
<comment type="similarity">
    <text evidence="1">Belongs to the PanB family.</text>
</comment>
<protein>
    <recommendedName>
        <fullName evidence="1">3-methyl-2-oxobutanoate hydroxymethyltransferase</fullName>
        <ecNumber evidence="1">2.1.2.11</ecNumber>
    </recommendedName>
    <alternativeName>
        <fullName evidence="1">Ketopantoate hydroxymethyltransferase</fullName>
        <shortName evidence="1">KPHMT</shortName>
    </alternativeName>
</protein>
<feature type="chain" id="PRO_0000297281" description="3-methyl-2-oxobutanoate hydroxymethyltransferase">
    <location>
        <begin position="1"/>
        <end position="270"/>
    </location>
</feature>
<feature type="active site" description="Proton acceptor" evidence="1">
    <location>
        <position position="187"/>
    </location>
</feature>
<feature type="binding site" evidence="1">
    <location>
        <begin position="50"/>
        <end position="51"/>
    </location>
    <ligand>
        <name>3-methyl-2-oxobutanoate</name>
        <dbReference type="ChEBI" id="CHEBI:11851"/>
    </ligand>
</feature>
<feature type="binding site" evidence="1">
    <location>
        <position position="50"/>
    </location>
    <ligand>
        <name>Mg(2+)</name>
        <dbReference type="ChEBI" id="CHEBI:18420"/>
    </ligand>
</feature>
<feature type="binding site" evidence="1">
    <location>
        <position position="89"/>
    </location>
    <ligand>
        <name>3-methyl-2-oxobutanoate</name>
        <dbReference type="ChEBI" id="CHEBI:11851"/>
    </ligand>
</feature>
<feature type="binding site" evidence="1">
    <location>
        <position position="89"/>
    </location>
    <ligand>
        <name>Mg(2+)</name>
        <dbReference type="ChEBI" id="CHEBI:18420"/>
    </ligand>
</feature>
<feature type="binding site" evidence="1">
    <location>
        <position position="118"/>
    </location>
    <ligand>
        <name>3-methyl-2-oxobutanoate</name>
        <dbReference type="ChEBI" id="CHEBI:11851"/>
    </ligand>
</feature>
<feature type="binding site" evidence="1">
    <location>
        <position position="120"/>
    </location>
    <ligand>
        <name>Mg(2+)</name>
        <dbReference type="ChEBI" id="CHEBI:18420"/>
    </ligand>
</feature>
<reference key="1">
    <citation type="journal article" date="2006" name="PLoS Genet.">
        <title>Who ate whom? Adaptive Helicobacter genomic changes that accompanied a host jump from early humans to large felines.</title>
        <authorList>
            <person name="Eppinger M."/>
            <person name="Baar C."/>
            <person name="Linz B."/>
            <person name="Raddatz G."/>
            <person name="Lanz C."/>
            <person name="Keller H."/>
            <person name="Morelli G."/>
            <person name="Gressmann H."/>
            <person name="Achtman M."/>
            <person name="Schuster S.C."/>
        </authorList>
    </citation>
    <scope>NUCLEOTIDE SEQUENCE [LARGE SCALE GENOMIC DNA]</scope>
    <source>
        <strain>Sheeba</strain>
    </source>
</reference>
<accession>Q17WP8</accession>
<organism>
    <name type="scientific">Helicobacter acinonychis (strain Sheeba)</name>
    <dbReference type="NCBI Taxonomy" id="382638"/>
    <lineage>
        <taxon>Bacteria</taxon>
        <taxon>Pseudomonadati</taxon>
        <taxon>Campylobacterota</taxon>
        <taxon>Epsilonproteobacteria</taxon>
        <taxon>Campylobacterales</taxon>
        <taxon>Helicobacteraceae</taxon>
        <taxon>Helicobacter</taxon>
    </lineage>
</organism>
<evidence type="ECO:0000255" key="1">
    <source>
        <dbReference type="HAMAP-Rule" id="MF_00156"/>
    </source>
</evidence>
<keyword id="KW-0963">Cytoplasm</keyword>
<keyword id="KW-0460">Magnesium</keyword>
<keyword id="KW-0479">Metal-binding</keyword>
<keyword id="KW-0566">Pantothenate biosynthesis</keyword>
<keyword id="KW-0808">Transferase</keyword>
<dbReference type="EC" id="2.1.2.11" evidence="1"/>
<dbReference type="EMBL" id="AM260522">
    <property type="protein sequence ID" value="CAJ99928.1"/>
    <property type="molecule type" value="Genomic_DNA"/>
</dbReference>
<dbReference type="RefSeq" id="WP_011578035.1">
    <property type="nucleotide sequence ID" value="NC_008229.1"/>
</dbReference>
<dbReference type="SMR" id="Q17WP8"/>
<dbReference type="STRING" id="382638.Hac_1169"/>
<dbReference type="GeneID" id="31758520"/>
<dbReference type="KEGG" id="hac:Hac_1169"/>
<dbReference type="eggNOG" id="COG0413">
    <property type="taxonomic scope" value="Bacteria"/>
</dbReference>
<dbReference type="HOGENOM" id="CLU_036645_1_0_7"/>
<dbReference type="OrthoDB" id="9781789at2"/>
<dbReference type="BioCyc" id="HACI382638:HAC_RS05040-MONOMER"/>
<dbReference type="UniPathway" id="UPA00028">
    <property type="reaction ID" value="UER00003"/>
</dbReference>
<dbReference type="Proteomes" id="UP000000775">
    <property type="component" value="Chromosome"/>
</dbReference>
<dbReference type="GO" id="GO:0005737">
    <property type="term" value="C:cytoplasm"/>
    <property type="evidence" value="ECO:0007669"/>
    <property type="project" value="UniProtKB-SubCell"/>
</dbReference>
<dbReference type="GO" id="GO:0003864">
    <property type="term" value="F:3-methyl-2-oxobutanoate hydroxymethyltransferase activity"/>
    <property type="evidence" value="ECO:0007669"/>
    <property type="project" value="UniProtKB-UniRule"/>
</dbReference>
<dbReference type="GO" id="GO:0000287">
    <property type="term" value="F:magnesium ion binding"/>
    <property type="evidence" value="ECO:0007669"/>
    <property type="project" value="TreeGrafter"/>
</dbReference>
<dbReference type="GO" id="GO:0015940">
    <property type="term" value="P:pantothenate biosynthetic process"/>
    <property type="evidence" value="ECO:0007669"/>
    <property type="project" value="UniProtKB-UniRule"/>
</dbReference>
<dbReference type="CDD" id="cd06557">
    <property type="entry name" value="KPHMT-like"/>
    <property type="match status" value="1"/>
</dbReference>
<dbReference type="FunFam" id="3.20.20.60:FF:000003">
    <property type="entry name" value="3-methyl-2-oxobutanoate hydroxymethyltransferase"/>
    <property type="match status" value="1"/>
</dbReference>
<dbReference type="Gene3D" id="3.20.20.60">
    <property type="entry name" value="Phosphoenolpyruvate-binding domains"/>
    <property type="match status" value="1"/>
</dbReference>
<dbReference type="HAMAP" id="MF_00156">
    <property type="entry name" value="PanB"/>
    <property type="match status" value="1"/>
</dbReference>
<dbReference type="InterPro" id="IPR003700">
    <property type="entry name" value="Pantoate_hydroxy_MeTrfase"/>
</dbReference>
<dbReference type="InterPro" id="IPR015813">
    <property type="entry name" value="Pyrv/PenolPyrv_kinase-like_dom"/>
</dbReference>
<dbReference type="InterPro" id="IPR040442">
    <property type="entry name" value="Pyrv_kinase-like_dom_sf"/>
</dbReference>
<dbReference type="NCBIfam" id="TIGR00222">
    <property type="entry name" value="panB"/>
    <property type="match status" value="1"/>
</dbReference>
<dbReference type="NCBIfam" id="NF001452">
    <property type="entry name" value="PRK00311.1"/>
    <property type="match status" value="1"/>
</dbReference>
<dbReference type="PANTHER" id="PTHR20881">
    <property type="entry name" value="3-METHYL-2-OXOBUTANOATE HYDROXYMETHYLTRANSFERASE"/>
    <property type="match status" value="1"/>
</dbReference>
<dbReference type="PANTHER" id="PTHR20881:SF0">
    <property type="entry name" value="3-METHYL-2-OXOBUTANOATE HYDROXYMETHYLTRANSFERASE"/>
    <property type="match status" value="1"/>
</dbReference>
<dbReference type="Pfam" id="PF02548">
    <property type="entry name" value="Pantoate_transf"/>
    <property type="match status" value="1"/>
</dbReference>
<dbReference type="PIRSF" id="PIRSF000388">
    <property type="entry name" value="Pantoate_hydroxy_MeTrfase"/>
    <property type="match status" value="1"/>
</dbReference>
<dbReference type="SUPFAM" id="SSF51621">
    <property type="entry name" value="Phosphoenolpyruvate/pyruvate domain"/>
    <property type="match status" value="1"/>
</dbReference>
<gene>
    <name evidence="1" type="primary">panB</name>
    <name type="ordered locus">Hac_1169</name>
</gene>
<sequence>MSMQTAKTKKITLNHLQAKKNHEKIIAITAYDALFAQMFDPIVDVILVGDSLNMSFFNQNDTLSASLEMMLYHTKAVCMGAKTPFIITDMPFGSYKDEKTALKNAIKVYKETQASAIKLEGGKEKAKLVKTLTNEGVIVVGHIGLMPQFVRLDGGYKIKGKNEEQQKKLLEDALSLEEAGVGLLVLEGITTPIAQVITQKIKIPTIGIGSGKDCDGQILVWSDMLGFFDSFKPKFVREYLKGKELVQKAIEQYADDVKKGFFPNELESYH</sequence>
<name>PANB_HELAH</name>
<proteinExistence type="inferred from homology"/>